<organism>
    <name type="scientific">Escherichia coli (strain K12)</name>
    <dbReference type="NCBI Taxonomy" id="83333"/>
    <lineage>
        <taxon>Bacteria</taxon>
        <taxon>Pseudomonadati</taxon>
        <taxon>Pseudomonadota</taxon>
        <taxon>Gammaproteobacteria</taxon>
        <taxon>Enterobacterales</taxon>
        <taxon>Enterobacteriaceae</taxon>
        <taxon>Escherichia</taxon>
    </lineage>
</organism>
<feature type="signal peptide" evidence="1">
    <location>
        <begin position="1"/>
        <end position="20"/>
    </location>
</feature>
<feature type="chain" id="PRO_0000013944" description="Uncharacterized protein YtfJ">
    <location>
        <begin position="21"/>
        <end position="184"/>
    </location>
</feature>
<proteinExistence type="evidence at protein level"/>
<reference key="1">
    <citation type="journal article" date="1995" name="Nucleic Acids Res.">
        <title>Analysis of the Escherichia coli genome VI: DNA sequence of the region from 92.8 through 100 minutes.</title>
        <authorList>
            <person name="Burland V.D."/>
            <person name="Plunkett G. III"/>
            <person name="Sofia H.J."/>
            <person name="Daniels D.L."/>
            <person name="Blattner F.R."/>
        </authorList>
    </citation>
    <scope>NUCLEOTIDE SEQUENCE [LARGE SCALE GENOMIC DNA]</scope>
    <source>
        <strain>K12 / MG1655 / ATCC 47076</strain>
    </source>
</reference>
<reference key="2">
    <citation type="journal article" date="1997" name="Science">
        <title>The complete genome sequence of Escherichia coli K-12.</title>
        <authorList>
            <person name="Blattner F.R."/>
            <person name="Plunkett G. III"/>
            <person name="Bloch C.A."/>
            <person name="Perna N.T."/>
            <person name="Burland V."/>
            <person name="Riley M."/>
            <person name="Collado-Vides J."/>
            <person name="Glasner J.D."/>
            <person name="Rode C.K."/>
            <person name="Mayhew G.F."/>
            <person name="Gregor J."/>
            <person name="Davis N.W."/>
            <person name="Kirkpatrick H.A."/>
            <person name="Goeden M.A."/>
            <person name="Rose D.J."/>
            <person name="Mau B."/>
            <person name="Shao Y."/>
        </authorList>
    </citation>
    <scope>NUCLEOTIDE SEQUENCE [LARGE SCALE GENOMIC DNA]</scope>
    <source>
        <strain>K12 / MG1655 / ATCC 47076</strain>
    </source>
</reference>
<reference key="3">
    <citation type="journal article" date="2006" name="Mol. Syst. Biol.">
        <title>Highly accurate genome sequences of Escherichia coli K-12 strains MG1655 and W3110.</title>
        <authorList>
            <person name="Hayashi K."/>
            <person name="Morooka N."/>
            <person name="Yamamoto Y."/>
            <person name="Fujita K."/>
            <person name="Isono K."/>
            <person name="Choi S."/>
            <person name="Ohtsubo E."/>
            <person name="Baba T."/>
            <person name="Wanner B.L."/>
            <person name="Mori H."/>
            <person name="Horiuchi T."/>
        </authorList>
    </citation>
    <scope>NUCLEOTIDE SEQUENCE [LARGE SCALE GENOMIC DNA]</scope>
    <source>
        <strain>K12 / W3110 / ATCC 27325 / DSM 5911</strain>
    </source>
</reference>
<reference key="4">
    <citation type="journal article" date="1994" name="Biosci. Biotechnol. Biochem.">
        <title>Analysis of products of the Escherichia coli genomic genes and regulation of their expressions: an applicable procedure for genomic analysis of other microorganisms.</title>
        <authorList>
            <person name="Talukder A.A."/>
            <person name="Yanai S."/>
            <person name="Yamada M."/>
        </authorList>
    </citation>
    <scope>NUCLEOTIDE SEQUENCE [GENOMIC DNA] OF 1-36</scope>
    <source>
        <strain>K12 / W3110 / ATCC 27325 / DSM 5911</strain>
    </source>
</reference>
<reference key="5">
    <citation type="journal article" date="1997" name="Electrophoresis">
        <title>Comparing the predicted and observed properties of proteins encoded in the genome of Escherichia coli K-12.</title>
        <authorList>
            <person name="Link A.J."/>
            <person name="Robison K."/>
            <person name="Church G.M."/>
        </authorList>
    </citation>
    <scope>PROTEIN SEQUENCE OF 21-32</scope>
    <source>
        <strain>K12 / EMG2</strain>
    </source>
</reference>
<reference key="6">
    <citation type="journal article" date="1999" name="Electrophoresis">
        <title>Enrichment of low abundance proteins of Escherichia coli by hydroxyapatite chromatography.</title>
        <authorList>
            <person name="Fountoulakis M."/>
            <person name="Takacs M.-F."/>
            <person name="Berndt P."/>
            <person name="Langen H."/>
            <person name="Takacs B."/>
        </authorList>
    </citation>
    <scope>IDENTIFICATION BY MASS SPECTROMETRY</scope>
    <source>
        <strain>B / BL21</strain>
    </source>
</reference>
<name>YTFJ_ECOLI</name>
<protein>
    <recommendedName>
        <fullName>Uncharacterized protein YtfJ</fullName>
    </recommendedName>
</protein>
<dbReference type="EMBL" id="U14003">
    <property type="protein sequence ID" value="AAA97112.1"/>
    <property type="molecule type" value="Genomic_DNA"/>
</dbReference>
<dbReference type="EMBL" id="U00096">
    <property type="protein sequence ID" value="AAC77173.1"/>
    <property type="molecule type" value="Genomic_DNA"/>
</dbReference>
<dbReference type="EMBL" id="AP009048">
    <property type="protein sequence ID" value="BAE78217.1"/>
    <property type="molecule type" value="Genomic_DNA"/>
</dbReference>
<dbReference type="EMBL" id="D21142">
    <property type="protein sequence ID" value="BAA04678.1"/>
    <property type="molecule type" value="Genomic_DNA"/>
</dbReference>
<dbReference type="PIR" id="S56441">
    <property type="entry name" value="S56441"/>
</dbReference>
<dbReference type="RefSeq" id="NP_418637.1">
    <property type="nucleotide sequence ID" value="NC_000913.3"/>
</dbReference>
<dbReference type="RefSeq" id="WP_000175279.1">
    <property type="nucleotide sequence ID" value="NZ_LN832404.1"/>
</dbReference>
<dbReference type="BioGRID" id="4261015">
    <property type="interactions" value="8"/>
</dbReference>
<dbReference type="FunCoup" id="P39187">
    <property type="interactions" value="48"/>
</dbReference>
<dbReference type="STRING" id="511145.b4216"/>
<dbReference type="jPOST" id="P39187"/>
<dbReference type="PaxDb" id="511145-b4216"/>
<dbReference type="EnsemblBacteria" id="AAC77173">
    <property type="protein sequence ID" value="AAC77173"/>
    <property type="gene ID" value="b4216"/>
</dbReference>
<dbReference type="GeneID" id="948737"/>
<dbReference type="KEGG" id="ecj:JW4175"/>
<dbReference type="KEGG" id="eco:b4216"/>
<dbReference type="KEGG" id="ecoc:C3026_22770"/>
<dbReference type="PATRIC" id="fig|1411691.4.peg.2485"/>
<dbReference type="EchoBASE" id="EB2403"/>
<dbReference type="eggNOG" id="COG3054">
    <property type="taxonomic scope" value="Bacteria"/>
</dbReference>
<dbReference type="HOGENOM" id="CLU_091011_0_0_6"/>
<dbReference type="InParanoid" id="P39187"/>
<dbReference type="OMA" id="MASAHNF"/>
<dbReference type="OrthoDB" id="5689995at2"/>
<dbReference type="PhylomeDB" id="P39187"/>
<dbReference type="BioCyc" id="EcoCyc:G7871-MONOMER"/>
<dbReference type="PRO" id="PR:P39187"/>
<dbReference type="Proteomes" id="UP000000625">
    <property type="component" value="Chromosome"/>
</dbReference>
<dbReference type="GO" id="GO:0042597">
    <property type="term" value="C:periplasmic space"/>
    <property type="evidence" value="ECO:0007669"/>
    <property type="project" value="UniProtKB-SubCell"/>
</dbReference>
<dbReference type="InterPro" id="IPR006513">
    <property type="entry name" value="YtfJ_HI0045"/>
</dbReference>
<dbReference type="NCBIfam" id="TIGR01626">
    <property type="entry name" value="ytfJ_HI0045"/>
    <property type="match status" value="1"/>
</dbReference>
<dbReference type="Pfam" id="PF09695">
    <property type="entry name" value="YtfJ_HI0045"/>
    <property type="match status" value="1"/>
</dbReference>
<accession>P39187</accession>
<accession>Q2M689</accession>
<sequence length="184" mass="20421">MTLRKILALTCLLLPMMASAHQFETGQRVPPIGITDRGELVLDKDQFSYKTWNSAQLVGKVRVLQHIAGRTSAKEKNATLIEAIKSAKLPHDRYQTTTIVNTDDAIPGSGMFVRSSLESNKKLYPWSQFIVDSNGVALGAWQLDEESSAVVVLDKDGRVQWAKDGALTPEEVQQVMDLLQKLLK</sequence>
<keyword id="KW-0903">Direct protein sequencing</keyword>
<keyword id="KW-0574">Periplasm</keyword>
<keyword id="KW-1185">Reference proteome</keyword>
<keyword id="KW-0732">Signal</keyword>
<gene>
    <name type="primary">ytfJ</name>
    <name type="ordered locus">b4216</name>
    <name type="ordered locus">JW4175</name>
</gene>
<comment type="subcellular location">
    <subcellularLocation>
        <location evidence="2">Periplasm</location>
    </subcellularLocation>
</comment>
<comment type="similarity">
    <text evidence="2">To H.influenzae HI_0045.</text>
</comment>
<evidence type="ECO:0000269" key="1">
    <source>
    </source>
</evidence>
<evidence type="ECO:0000305" key="2"/>